<gene>
    <name type="primary">HN</name>
</gene>
<name>HN_PI3HV</name>
<dbReference type="EC" id="3.2.1.18" evidence="4"/>
<dbReference type="EMBL" id="M18764">
    <property type="protein sequence ID" value="AAA46851.1"/>
    <property type="molecule type" value="Genomic_RNA"/>
</dbReference>
<dbReference type="PIR" id="F29970">
    <property type="entry name" value="HNNZ83"/>
</dbReference>
<dbReference type="SMR" id="P12564"/>
<dbReference type="DrugBank" id="DB03991">
    <property type="generic name" value="2-deoxy-2,3-dehydro-N-acetylneuraminic acid"/>
</dbReference>
<dbReference type="DrugBank" id="DB04265">
    <property type="generic name" value="N-acetyl-beta-neuraminic acid"/>
</dbReference>
<dbReference type="CAZy" id="GH83">
    <property type="family name" value="Glycoside Hydrolase Family 83"/>
</dbReference>
<dbReference type="GlyCosmos" id="P12564">
    <property type="glycosylation" value="3 sites, No reported glycans"/>
</dbReference>
<dbReference type="GO" id="GO:0020002">
    <property type="term" value="C:host cell plasma membrane"/>
    <property type="evidence" value="ECO:0007669"/>
    <property type="project" value="UniProtKB-SubCell"/>
</dbReference>
<dbReference type="GO" id="GO:0016020">
    <property type="term" value="C:membrane"/>
    <property type="evidence" value="ECO:0007669"/>
    <property type="project" value="UniProtKB-KW"/>
</dbReference>
<dbReference type="GO" id="GO:0019031">
    <property type="term" value="C:viral envelope"/>
    <property type="evidence" value="ECO:0007669"/>
    <property type="project" value="UniProtKB-KW"/>
</dbReference>
<dbReference type="GO" id="GO:0055036">
    <property type="term" value="C:virion membrane"/>
    <property type="evidence" value="ECO:0007669"/>
    <property type="project" value="UniProtKB-SubCell"/>
</dbReference>
<dbReference type="GO" id="GO:0004308">
    <property type="term" value="F:exo-alpha-sialidase activity"/>
    <property type="evidence" value="ECO:0007669"/>
    <property type="project" value="UniProtKB-EC"/>
</dbReference>
<dbReference type="GO" id="GO:0046789">
    <property type="term" value="F:host cell surface receptor binding"/>
    <property type="evidence" value="ECO:0007669"/>
    <property type="project" value="InterPro"/>
</dbReference>
<dbReference type="GO" id="GO:0046718">
    <property type="term" value="P:symbiont entry into host cell"/>
    <property type="evidence" value="ECO:0007669"/>
    <property type="project" value="UniProtKB-KW"/>
</dbReference>
<dbReference type="GO" id="GO:0019062">
    <property type="term" value="P:virion attachment to host cell"/>
    <property type="evidence" value="ECO:0007669"/>
    <property type="project" value="UniProtKB-KW"/>
</dbReference>
<dbReference type="CDD" id="cd15469">
    <property type="entry name" value="HN"/>
    <property type="match status" value="1"/>
</dbReference>
<dbReference type="Gene3D" id="2.120.10.10">
    <property type="match status" value="1"/>
</dbReference>
<dbReference type="InterPro" id="IPR016285">
    <property type="entry name" value="Hemagglutn-neuramid"/>
</dbReference>
<dbReference type="InterPro" id="IPR000665">
    <property type="entry name" value="Hemagglutn/HN"/>
</dbReference>
<dbReference type="InterPro" id="IPR036278">
    <property type="entry name" value="Sialidase_sf"/>
</dbReference>
<dbReference type="Pfam" id="PF00423">
    <property type="entry name" value="HN"/>
    <property type="match status" value="1"/>
</dbReference>
<dbReference type="PIRSF" id="PIRSF001072">
    <property type="entry name" value="Hemagglut-neuramid_paramyxoV"/>
    <property type="match status" value="1"/>
</dbReference>
<dbReference type="SUPFAM" id="SSF50939">
    <property type="entry name" value="Sialidases"/>
    <property type="match status" value="1"/>
</dbReference>
<accession>P12564</accession>
<feature type="chain" id="PRO_0000142629" description="Hemagglutinin-neuraminidase">
    <location>
        <begin position="1"/>
        <end position="572"/>
    </location>
</feature>
<feature type="topological domain" description="Intravirion" evidence="5">
    <location>
        <begin position="1"/>
        <end position="31"/>
    </location>
</feature>
<feature type="transmembrane region" description="Helical" evidence="5">
    <location>
        <begin position="32"/>
        <end position="52"/>
    </location>
</feature>
<feature type="topological domain" description="Virion surface" evidence="5">
    <location>
        <begin position="53"/>
        <end position="572"/>
    </location>
</feature>
<feature type="region of interest" description="Involved in neuraminidase activity" evidence="3">
    <location>
        <begin position="252"/>
        <end position="257"/>
    </location>
</feature>
<feature type="glycosylation site" description="N-linked (GlcNAc...) asparagine; by host" evidence="5">
    <location>
        <position position="308"/>
    </location>
</feature>
<feature type="glycosylation site" description="N-linked (GlcNAc...) asparagine; by host" evidence="5">
    <location>
        <position position="351"/>
    </location>
</feature>
<feature type="glycosylation site" description="N-linked (GlcNAc...) asparagine; by host" evidence="5">
    <location>
        <position position="523"/>
    </location>
</feature>
<feature type="disulfide bond" evidence="4">
    <location>
        <begin position="190"/>
        <end position="214"/>
    </location>
</feature>
<feature type="disulfide bond" evidence="4">
    <location>
        <begin position="256"/>
        <end position="269"/>
    </location>
</feature>
<feature type="disulfide bond" evidence="4">
    <location>
        <begin position="355"/>
        <end position="469"/>
    </location>
</feature>
<feature type="disulfide bond" evidence="4">
    <location>
        <begin position="463"/>
        <end position="473"/>
    </location>
</feature>
<feature type="disulfide bond" evidence="4">
    <location>
        <begin position="535"/>
        <end position="544"/>
    </location>
</feature>
<sequence>MEYWKHTNHGKDAGNELETSMATHGNKLTNKIIYILWTIILVLLSIVFIIVLINSIKSEKAHESLLRDINNEFMEITGKIQMASDNTNDLIQSGVNTRLLTIQSHVQNYIPISLTQQMSDLRKFISEITIRNDNQEVLPQRITHDVGIKPLNPDDFWRCTSGLPSLMKTPKIRLMPGPGLLAMPTTDDGCIRTPSLVINDLIYAYTSNLITRGCQDIGKSYQVLQIGIITVNSDLVPDLNPRISHTFNINDNRKSCSLALLNTDVYQLCSTPKVDERSDYASSGIEDIVLDIVNYDGSISTTRFKNNNISFDQPYAALYPSVGPGIYYKGKIIFLGYGGLEHPINENVICNTTGCPGKTQRDCNQASHSPWFSDRRMVNSIIVVDKGLNSTPKLKVWTISMRQNYWGSEGRLLLLGNKIYIYTRSTSWHSKLQLGIIDITDYSDIRIKWTWHNVLSRPGNNECPWGHSCPDGCITGVYTDAYPLNPTGSIVSSVILDSQKSRVNPVITYSTATERVNELAIRNRTLSAGYTTTSCITHYNKGYCFHIVEINHKSLNTFQPMLFKTEIPKSCS</sequence>
<organismHost>
    <name type="scientific">Homo sapiens</name>
    <name type="common">Human</name>
    <dbReference type="NCBI Taxonomy" id="9606"/>
</organismHost>
<organism>
    <name type="scientific">Human parainfluenza 3 virus (strain Tex/12677/83)</name>
    <name type="common">HPIV-3</name>
    <dbReference type="NCBI Taxonomy" id="11221"/>
    <lineage>
        <taxon>Viruses</taxon>
        <taxon>Riboviria</taxon>
        <taxon>Orthornavirae</taxon>
        <taxon>Negarnaviricota</taxon>
        <taxon>Haploviricotina</taxon>
        <taxon>Monjiviricetes</taxon>
        <taxon>Mononegavirales</taxon>
        <taxon>Paramyxoviridae</taxon>
        <taxon>Feraresvirinae</taxon>
        <taxon>Respirovirus</taxon>
        <taxon>Respirovirus pneumoniae</taxon>
    </lineage>
</organism>
<keyword id="KW-1015">Disulfide bond</keyword>
<keyword id="KW-0325">Glycoprotein</keyword>
<keyword id="KW-0348">Hemagglutinin</keyword>
<keyword id="KW-1032">Host cell membrane</keyword>
<keyword id="KW-1043">Host membrane</keyword>
<keyword id="KW-0945">Host-virus interaction</keyword>
<keyword id="KW-0378">Hydrolase</keyword>
<keyword id="KW-0472">Membrane</keyword>
<keyword id="KW-0735">Signal-anchor</keyword>
<keyword id="KW-0812">Transmembrane</keyword>
<keyword id="KW-1133">Transmembrane helix</keyword>
<keyword id="KW-1161">Viral attachment to host cell</keyword>
<keyword id="KW-0261">Viral envelope protein</keyword>
<keyword id="KW-0946">Virion</keyword>
<keyword id="KW-1160">Virus entry into host cell</keyword>
<comment type="function">
    <text evidence="1">Attaches the virus to sialic acid-containing cell receptors and thereby initiating infection. Binding of HN protein to the receptor induces a conformational change that allows the F protein to trigger virion/cell membranes fusion (By similarity).</text>
</comment>
<comment type="function">
    <text evidence="1">Neuraminidase activity ensures the efficient spread of the virus by dissociating the mature virions from the neuraminic acid containing glycoproteins.</text>
</comment>
<comment type="catalytic activity">
    <reaction evidence="4">
        <text>Hydrolysis of alpha-(2-&gt;3)-, alpha-(2-&gt;6)-, alpha-(2-&gt;8)- glycosidic linkages of terminal sialic acid residues in oligosaccharides, glycoproteins, glycolipids, colominic acid and synthetic substrates.</text>
        <dbReference type="EC" id="3.2.1.18"/>
    </reaction>
</comment>
<comment type="subunit">
    <text evidence="2 4">Homotetramer; composed of disulfide-linked homodimers (By similarity). Interacts with F protein trimer (By similarity).</text>
</comment>
<comment type="subcellular location">
    <subcellularLocation>
        <location evidence="6">Virion membrane</location>
        <topology evidence="6">Single-pass type II membrane protein</topology>
    </subcellularLocation>
    <subcellularLocation>
        <location evidence="6">Host cell membrane</location>
        <topology evidence="6">Single-pass type II membrane protein</topology>
    </subcellularLocation>
</comment>
<comment type="domain">
    <text evidence="4">The C-terminus (head domain) is involved in binding the cellular receptor.</text>
</comment>
<comment type="similarity">
    <text evidence="6">Belongs to the paramyxoviruses hemagglutinin-neuraminidase family.</text>
</comment>
<evidence type="ECO:0000250" key="1"/>
<evidence type="ECO:0000250" key="2">
    <source>
        <dbReference type="UniProtKB" id="P04853"/>
    </source>
</evidence>
<evidence type="ECO:0000250" key="3">
    <source>
        <dbReference type="UniProtKB" id="Q91UL0"/>
    </source>
</evidence>
<evidence type="ECO:0000250" key="4">
    <source>
        <dbReference type="UniProtKB" id="Q9WAF5"/>
    </source>
</evidence>
<evidence type="ECO:0000255" key="5"/>
<evidence type="ECO:0000305" key="6"/>
<protein>
    <recommendedName>
        <fullName>Hemagglutinin-neuraminidase</fullName>
        <ecNumber evidence="4">3.2.1.18</ecNumber>
    </recommendedName>
</protein>
<reference key="1">
    <citation type="journal article" date="1988" name="Virology">
        <title>Nucleotide and deduced amino acid sequence of hemagglutinin-neuraminidase genes of human type 3 parainfluenza viruses isolated from 1957 to 1983.</title>
        <authorList>
            <person name="van Wyke Coelingh K.L."/>
            <person name="Winter C.C."/>
            <person name="Murphy B.R."/>
        </authorList>
    </citation>
    <scope>NUCLEOTIDE SEQUENCE [GENOMIC RNA]</scope>
</reference>
<proteinExistence type="inferred from homology"/>